<evidence type="ECO:0000255" key="1">
    <source>
        <dbReference type="HAMAP-Rule" id="MF_01302"/>
    </source>
</evidence>
<evidence type="ECO:0000305" key="2"/>
<comment type="function">
    <text evidence="1">One of the primary rRNA binding proteins, it binds directly to 16S rRNA central domain where it helps coordinate assembly of the platform of the 30S subunit.</text>
</comment>
<comment type="subunit">
    <text evidence="1">Part of the 30S ribosomal subunit. Contacts proteins S5 and S12.</text>
</comment>
<comment type="similarity">
    <text evidence="1">Belongs to the universal ribosomal protein uS8 family.</text>
</comment>
<keyword id="KW-0687">Ribonucleoprotein</keyword>
<keyword id="KW-0689">Ribosomal protein</keyword>
<keyword id="KW-0694">RNA-binding</keyword>
<keyword id="KW-0699">rRNA-binding</keyword>
<feature type="chain" id="PRO_0000290813" description="Small ribosomal subunit protein uS8">
    <location>
        <begin position="1"/>
        <end position="131"/>
    </location>
</feature>
<dbReference type="EMBL" id="CP000440">
    <property type="protein sequence ID" value="ABI85841.1"/>
    <property type="molecule type" value="Genomic_DNA"/>
</dbReference>
<dbReference type="RefSeq" id="WP_006477185.1">
    <property type="nucleotide sequence ID" value="NZ_CP009798.1"/>
</dbReference>
<dbReference type="SMR" id="Q0BJ32"/>
<dbReference type="GeneID" id="98107146"/>
<dbReference type="KEGG" id="bam:Bamb_0281"/>
<dbReference type="PATRIC" id="fig|339670.21.peg.1339"/>
<dbReference type="eggNOG" id="COG0096">
    <property type="taxonomic scope" value="Bacteria"/>
</dbReference>
<dbReference type="Proteomes" id="UP000000662">
    <property type="component" value="Chromosome 1"/>
</dbReference>
<dbReference type="GO" id="GO:1990904">
    <property type="term" value="C:ribonucleoprotein complex"/>
    <property type="evidence" value="ECO:0007669"/>
    <property type="project" value="UniProtKB-KW"/>
</dbReference>
<dbReference type="GO" id="GO:0005840">
    <property type="term" value="C:ribosome"/>
    <property type="evidence" value="ECO:0007669"/>
    <property type="project" value="UniProtKB-KW"/>
</dbReference>
<dbReference type="GO" id="GO:0019843">
    <property type="term" value="F:rRNA binding"/>
    <property type="evidence" value="ECO:0007669"/>
    <property type="project" value="UniProtKB-UniRule"/>
</dbReference>
<dbReference type="GO" id="GO:0003735">
    <property type="term" value="F:structural constituent of ribosome"/>
    <property type="evidence" value="ECO:0007669"/>
    <property type="project" value="InterPro"/>
</dbReference>
<dbReference type="GO" id="GO:0006412">
    <property type="term" value="P:translation"/>
    <property type="evidence" value="ECO:0007669"/>
    <property type="project" value="UniProtKB-UniRule"/>
</dbReference>
<dbReference type="FunFam" id="3.30.1370.30:FF:000003">
    <property type="entry name" value="30S ribosomal protein S8"/>
    <property type="match status" value="1"/>
</dbReference>
<dbReference type="FunFam" id="3.30.1490.10:FF:000001">
    <property type="entry name" value="30S ribosomal protein S8"/>
    <property type="match status" value="1"/>
</dbReference>
<dbReference type="Gene3D" id="3.30.1370.30">
    <property type="match status" value="1"/>
</dbReference>
<dbReference type="Gene3D" id="3.30.1490.10">
    <property type="match status" value="1"/>
</dbReference>
<dbReference type="HAMAP" id="MF_01302_B">
    <property type="entry name" value="Ribosomal_uS8_B"/>
    <property type="match status" value="1"/>
</dbReference>
<dbReference type="InterPro" id="IPR000630">
    <property type="entry name" value="Ribosomal_uS8"/>
</dbReference>
<dbReference type="InterPro" id="IPR047863">
    <property type="entry name" value="Ribosomal_uS8_CS"/>
</dbReference>
<dbReference type="InterPro" id="IPR035987">
    <property type="entry name" value="Ribosomal_uS8_sf"/>
</dbReference>
<dbReference type="NCBIfam" id="NF001109">
    <property type="entry name" value="PRK00136.1"/>
    <property type="match status" value="1"/>
</dbReference>
<dbReference type="PANTHER" id="PTHR11758">
    <property type="entry name" value="40S RIBOSOMAL PROTEIN S15A"/>
    <property type="match status" value="1"/>
</dbReference>
<dbReference type="Pfam" id="PF00410">
    <property type="entry name" value="Ribosomal_S8"/>
    <property type="match status" value="1"/>
</dbReference>
<dbReference type="SUPFAM" id="SSF56047">
    <property type="entry name" value="Ribosomal protein S8"/>
    <property type="match status" value="1"/>
</dbReference>
<dbReference type="PROSITE" id="PS00053">
    <property type="entry name" value="RIBOSOMAL_S8"/>
    <property type="match status" value="1"/>
</dbReference>
<protein>
    <recommendedName>
        <fullName evidence="1">Small ribosomal subunit protein uS8</fullName>
    </recommendedName>
    <alternativeName>
        <fullName evidence="2">30S ribosomal protein S8</fullName>
    </alternativeName>
</protein>
<accession>Q0BJ32</accession>
<proteinExistence type="inferred from homology"/>
<reference key="1">
    <citation type="submission" date="2006-08" db="EMBL/GenBank/DDBJ databases">
        <title>Complete sequence of chromosome 1 of Burkholderia cepacia AMMD.</title>
        <authorList>
            <person name="Copeland A."/>
            <person name="Lucas S."/>
            <person name="Lapidus A."/>
            <person name="Barry K."/>
            <person name="Detter J.C."/>
            <person name="Glavina del Rio T."/>
            <person name="Hammon N."/>
            <person name="Israni S."/>
            <person name="Pitluck S."/>
            <person name="Bruce D."/>
            <person name="Chain P."/>
            <person name="Malfatti S."/>
            <person name="Shin M."/>
            <person name="Vergez L."/>
            <person name="Schmutz J."/>
            <person name="Larimer F."/>
            <person name="Land M."/>
            <person name="Hauser L."/>
            <person name="Kyrpides N."/>
            <person name="Kim E."/>
            <person name="Parke J."/>
            <person name="Coenye T."/>
            <person name="Konstantinidis K."/>
            <person name="Ramette A."/>
            <person name="Tiedje J."/>
            <person name="Richardson P."/>
        </authorList>
    </citation>
    <scope>NUCLEOTIDE SEQUENCE [LARGE SCALE GENOMIC DNA]</scope>
    <source>
        <strain>ATCC BAA-244 / DSM 16087 / CCUG 44356 / LMG 19182 / AMMD</strain>
    </source>
</reference>
<gene>
    <name evidence="1" type="primary">rpsH</name>
    <name type="ordered locus">Bamb_0281</name>
</gene>
<sequence length="131" mass="14199">MSMSDPIADMLTRIRNAQMVEKVSVAMPSSKVKVAIAQVLKDEGYIDDFAVKAEGAKSELNIALKYYAGRPVIERLERVSKPGLRVYRGRNDIPQVMNGLGVAIVSTPKGVMTDRKARATGVGGEVICYVA</sequence>
<organism>
    <name type="scientific">Burkholderia ambifaria (strain ATCC BAA-244 / DSM 16087 / CCUG 44356 / LMG 19182 / AMMD)</name>
    <name type="common">Burkholderia cepacia (strain AMMD)</name>
    <dbReference type="NCBI Taxonomy" id="339670"/>
    <lineage>
        <taxon>Bacteria</taxon>
        <taxon>Pseudomonadati</taxon>
        <taxon>Pseudomonadota</taxon>
        <taxon>Betaproteobacteria</taxon>
        <taxon>Burkholderiales</taxon>
        <taxon>Burkholderiaceae</taxon>
        <taxon>Burkholderia</taxon>
        <taxon>Burkholderia cepacia complex</taxon>
    </lineage>
</organism>
<name>RS8_BURCM</name>